<organism>
    <name type="scientific">Methanocaldococcus jannaschii (strain ATCC 43067 / DSM 2661 / JAL-1 / JCM 10045 / NBRC 100440)</name>
    <name type="common">Methanococcus jannaschii</name>
    <dbReference type="NCBI Taxonomy" id="243232"/>
    <lineage>
        <taxon>Archaea</taxon>
        <taxon>Methanobacteriati</taxon>
        <taxon>Methanobacteriota</taxon>
        <taxon>Methanomada group</taxon>
        <taxon>Methanococci</taxon>
        <taxon>Methanococcales</taxon>
        <taxon>Methanocaldococcaceae</taxon>
        <taxon>Methanocaldococcus</taxon>
    </lineage>
</organism>
<evidence type="ECO:0000250" key="1"/>
<evidence type="ECO:0000305" key="2"/>
<evidence type="ECO:0007829" key="3">
    <source>
        <dbReference type="PDB" id="2YYY"/>
    </source>
</evidence>
<gene>
    <name type="primary">gap</name>
    <name type="ordered locus">MJ1146</name>
</gene>
<comment type="catalytic activity">
    <reaction>
        <text>D-glyceraldehyde 3-phosphate + phosphate + NADP(+) = (2R)-3-phospho-glyceroyl phosphate + NADPH + H(+)</text>
        <dbReference type="Rhea" id="RHEA:10296"/>
        <dbReference type="ChEBI" id="CHEBI:15378"/>
        <dbReference type="ChEBI" id="CHEBI:43474"/>
        <dbReference type="ChEBI" id="CHEBI:57604"/>
        <dbReference type="ChEBI" id="CHEBI:57783"/>
        <dbReference type="ChEBI" id="CHEBI:58349"/>
        <dbReference type="ChEBI" id="CHEBI:59776"/>
        <dbReference type="EC" id="1.2.1.59"/>
    </reaction>
</comment>
<comment type="catalytic activity">
    <reaction>
        <text>D-glyceraldehyde 3-phosphate + phosphate + NAD(+) = (2R)-3-phospho-glyceroyl phosphate + NADH + H(+)</text>
        <dbReference type="Rhea" id="RHEA:10300"/>
        <dbReference type="ChEBI" id="CHEBI:15378"/>
        <dbReference type="ChEBI" id="CHEBI:43474"/>
        <dbReference type="ChEBI" id="CHEBI:57540"/>
        <dbReference type="ChEBI" id="CHEBI:57604"/>
        <dbReference type="ChEBI" id="CHEBI:57945"/>
        <dbReference type="ChEBI" id="CHEBI:59776"/>
        <dbReference type="EC" id="1.2.1.59"/>
    </reaction>
</comment>
<comment type="pathway">
    <text>Carbohydrate degradation; glycolysis; pyruvate from D-glyceraldehyde 3-phosphate: step 1/5.</text>
</comment>
<comment type="subunit">
    <text evidence="1">Homotetramer.</text>
</comment>
<comment type="subcellular location">
    <subcellularLocation>
        <location evidence="1">Cytoplasm</location>
    </subcellularLocation>
</comment>
<comment type="similarity">
    <text evidence="2">Belongs to the glyceraldehyde-3-phosphate dehydrogenase family.</text>
</comment>
<accession>Q58546</accession>
<proteinExistence type="evidence at protein level"/>
<protein>
    <recommendedName>
        <fullName>Glyceraldehyde-3-phosphate dehydrogenase</fullName>
        <shortName>GAPDH</shortName>
        <ecNumber>1.2.1.59</ecNumber>
    </recommendedName>
    <alternativeName>
        <fullName>NAD(P)-dependent glyceraldehyde-3-phosphate dehydrogenase</fullName>
    </alternativeName>
</protein>
<feature type="chain" id="PRO_0000145723" description="Glyceraldehyde-3-phosphate dehydrogenase">
    <location>
        <begin position="1"/>
        <end position="343"/>
    </location>
</feature>
<feature type="active site" description="Nucleophile" evidence="1">
    <location>
        <position position="144"/>
    </location>
</feature>
<feature type="binding site" evidence="1">
    <location>
        <begin position="12"/>
        <end position="13"/>
    </location>
    <ligand>
        <name>NAD(+)</name>
        <dbReference type="ChEBI" id="CHEBI:57540"/>
    </ligand>
</feature>
<feature type="binding site" evidence="1">
    <location>
        <position position="114"/>
    </location>
    <ligand>
        <name>NAD(+)</name>
        <dbReference type="ChEBI" id="CHEBI:57540"/>
    </ligand>
</feature>
<feature type="binding site" evidence="1">
    <location>
        <begin position="143"/>
        <end position="145"/>
    </location>
    <ligand>
        <name>D-glyceraldehyde 3-phosphate</name>
        <dbReference type="ChEBI" id="CHEBI:59776"/>
    </ligand>
</feature>
<feature type="binding site" evidence="1">
    <location>
        <position position="172"/>
    </location>
    <ligand>
        <name>NAD(+)</name>
        <dbReference type="ChEBI" id="CHEBI:57540"/>
    </ligand>
</feature>
<feature type="binding site" evidence="1">
    <location>
        <begin position="198"/>
        <end position="199"/>
    </location>
    <ligand>
        <name>D-glyceraldehyde 3-phosphate</name>
        <dbReference type="ChEBI" id="CHEBI:59776"/>
    </ligand>
</feature>
<feature type="binding site" evidence="1">
    <location>
        <position position="307"/>
    </location>
    <ligand>
        <name>NAD(+)</name>
        <dbReference type="ChEBI" id="CHEBI:57540"/>
    </ligand>
</feature>
<feature type="strand" evidence="3">
    <location>
        <begin position="3"/>
        <end position="8"/>
    </location>
</feature>
<feature type="helix" evidence="3">
    <location>
        <begin position="12"/>
        <end position="23"/>
    </location>
</feature>
<feature type="strand" evidence="3">
    <location>
        <begin position="24"/>
        <end position="36"/>
    </location>
</feature>
<feature type="helix" evidence="3">
    <location>
        <begin position="39"/>
        <end position="46"/>
    </location>
</feature>
<feature type="strand" evidence="3">
    <location>
        <begin position="51"/>
        <end position="55"/>
    </location>
</feature>
<feature type="helix" evidence="3">
    <location>
        <begin position="58"/>
        <end position="66"/>
    </location>
</feature>
<feature type="helix" evidence="3">
    <location>
        <begin position="75"/>
        <end position="77"/>
    </location>
</feature>
<feature type="helix" evidence="3">
    <location>
        <begin position="79"/>
        <end position="81"/>
    </location>
</feature>
<feature type="strand" evidence="3">
    <location>
        <begin position="83"/>
        <end position="87"/>
    </location>
</feature>
<feature type="helix" evidence="3">
    <location>
        <begin position="93"/>
        <end position="100"/>
    </location>
</feature>
<feature type="turn" evidence="3">
    <location>
        <begin position="101"/>
        <end position="106"/>
    </location>
</feature>
<feature type="strand" evidence="3">
    <location>
        <begin position="108"/>
        <end position="111"/>
    </location>
</feature>
<feature type="helix" evidence="3">
    <location>
        <begin position="117"/>
        <end position="119"/>
    </location>
</feature>
<feature type="strand" evidence="3">
    <location>
        <begin position="120"/>
        <end position="124"/>
    </location>
</feature>
<feature type="turn" evidence="3">
    <location>
        <begin position="126"/>
        <end position="128"/>
    </location>
</feature>
<feature type="helix" evidence="3">
    <location>
        <begin position="130"/>
        <end position="133"/>
    </location>
</feature>
<feature type="strand" evidence="3">
    <location>
        <begin position="137"/>
        <end position="141"/>
    </location>
</feature>
<feature type="helix" evidence="3">
    <location>
        <begin position="144"/>
        <end position="157"/>
    </location>
</feature>
<feature type="strand" evidence="3">
    <location>
        <begin position="160"/>
        <end position="174"/>
    </location>
</feature>
<feature type="strand" evidence="3">
    <location>
        <begin position="188"/>
        <end position="195"/>
    </location>
</feature>
<feature type="helix" evidence="3">
    <location>
        <begin position="198"/>
        <end position="205"/>
    </location>
</feature>
<feature type="helix" evidence="3">
    <location>
        <begin position="207"/>
        <end position="209"/>
    </location>
</feature>
<feature type="strand" evidence="3">
    <location>
        <begin position="212"/>
        <end position="221"/>
    </location>
</feature>
<feature type="strand" evidence="3">
    <location>
        <begin position="226"/>
        <end position="236"/>
    </location>
</feature>
<feature type="helix" evidence="3">
    <location>
        <begin position="240"/>
        <end position="249"/>
    </location>
</feature>
<feature type="strand" evidence="3">
    <location>
        <begin position="253"/>
        <end position="256"/>
    </location>
</feature>
<feature type="helix" evidence="3">
    <location>
        <begin position="258"/>
        <end position="260"/>
    </location>
</feature>
<feature type="helix" evidence="3">
    <location>
        <begin position="265"/>
        <end position="275"/>
    </location>
</feature>
<feature type="helix" evidence="3">
    <location>
        <begin position="278"/>
        <end position="280"/>
    </location>
</feature>
<feature type="strand" evidence="3">
    <location>
        <begin position="284"/>
        <end position="288"/>
    </location>
</feature>
<feature type="helix" evidence="3">
    <location>
        <begin position="289"/>
        <end position="291"/>
    </location>
</feature>
<feature type="strand" evidence="3">
    <location>
        <begin position="293"/>
        <end position="295"/>
    </location>
</feature>
<feature type="strand" evidence="3">
    <location>
        <begin position="298"/>
        <end position="305"/>
    </location>
</feature>
<feature type="turn" evidence="3">
    <location>
        <begin position="307"/>
        <end position="311"/>
    </location>
</feature>
<feature type="helix" evidence="3">
    <location>
        <begin position="312"/>
        <end position="322"/>
    </location>
</feature>
<feature type="helix" evidence="3">
    <location>
        <begin position="329"/>
        <end position="340"/>
    </location>
</feature>
<sequence length="343" mass="38102">MPAKVLINGYGSIGKRVADAVSMQDDMEVIGVTKTKPDFEARLAVEKGYKLFVAIPDNERVKLFEDAGIPVEGTILDIIEDADIVVDGAPKKIGKQNLENIYKPHKVKAILQGGEKAKDVEDNFNALWSYNRCYGKDYVRVVSCNTTGLCRILYAINSIADIKKARIVLVRRAADPNDDKTGPVNAITPNPVTVPSHHGPDVVSVVPEFEGKILTSAVIVPTTLMHMHTLMVEVDGDVSRDDILEAIKKTPRIITVRAEDGFSSTAKIIEYGRDLGRLRYDINELVVWEESINVLENEIFLMQAVHQESIVIPENIDCIRAMLQMEEDNFKSIEKTNKAMGIQ</sequence>
<name>G3P_METJA</name>
<keyword id="KW-0002">3D-structure</keyword>
<keyword id="KW-0963">Cytoplasm</keyword>
<keyword id="KW-0324">Glycolysis</keyword>
<keyword id="KW-0520">NAD</keyword>
<keyword id="KW-0521">NADP</keyword>
<keyword id="KW-0560">Oxidoreductase</keyword>
<keyword id="KW-1185">Reference proteome</keyword>
<reference key="1">
    <citation type="journal article" date="1996" name="Science">
        <title>Complete genome sequence of the methanogenic archaeon, Methanococcus jannaschii.</title>
        <authorList>
            <person name="Bult C.J."/>
            <person name="White O."/>
            <person name="Olsen G.J."/>
            <person name="Zhou L."/>
            <person name="Fleischmann R.D."/>
            <person name="Sutton G.G."/>
            <person name="Blake J.A."/>
            <person name="FitzGerald L.M."/>
            <person name="Clayton R.A."/>
            <person name="Gocayne J.D."/>
            <person name="Kerlavage A.R."/>
            <person name="Dougherty B.A."/>
            <person name="Tomb J.-F."/>
            <person name="Adams M.D."/>
            <person name="Reich C.I."/>
            <person name="Overbeek R."/>
            <person name="Kirkness E.F."/>
            <person name="Weinstock K.G."/>
            <person name="Merrick J.M."/>
            <person name="Glodek A."/>
            <person name="Scott J.L."/>
            <person name="Geoghagen N.S.M."/>
            <person name="Weidman J.F."/>
            <person name="Fuhrmann J.L."/>
            <person name="Nguyen D."/>
            <person name="Utterback T.R."/>
            <person name="Kelley J.M."/>
            <person name="Peterson J.D."/>
            <person name="Sadow P.W."/>
            <person name="Hanna M.C."/>
            <person name="Cotton M.D."/>
            <person name="Roberts K.M."/>
            <person name="Hurst M.A."/>
            <person name="Kaine B.P."/>
            <person name="Borodovsky M."/>
            <person name="Klenk H.-P."/>
            <person name="Fraser C.M."/>
            <person name="Smith H.O."/>
            <person name="Woese C.R."/>
            <person name="Venter J.C."/>
        </authorList>
    </citation>
    <scope>NUCLEOTIDE SEQUENCE [LARGE SCALE GENOMIC DNA]</scope>
    <source>
        <strain>ATCC 43067 / DSM 2661 / JAL-1 / JCM 10045 / NBRC 100440</strain>
    </source>
</reference>
<dbReference type="EC" id="1.2.1.59"/>
<dbReference type="EMBL" id="L77117">
    <property type="protein sequence ID" value="AAB99147.1"/>
    <property type="molecule type" value="Genomic_DNA"/>
</dbReference>
<dbReference type="PIR" id="A64443">
    <property type="entry name" value="A64443"/>
</dbReference>
<dbReference type="RefSeq" id="WP_010870657.1">
    <property type="nucleotide sequence ID" value="NC_000909.1"/>
</dbReference>
<dbReference type="PDB" id="2YYY">
    <property type="method" value="X-ray"/>
    <property type="resolution" value="1.85 A"/>
    <property type="chains" value="A/B=1-343"/>
</dbReference>
<dbReference type="PDBsum" id="2YYY"/>
<dbReference type="SMR" id="Q58546"/>
<dbReference type="FunCoup" id="Q58546">
    <property type="interactions" value="190"/>
</dbReference>
<dbReference type="STRING" id="243232.MJ_1146"/>
<dbReference type="PaxDb" id="243232-MJ_1146"/>
<dbReference type="EnsemblBacteria" id="AAB99147">
    <property type="protein sequence ID" value="AAB99147"/>
    <property type="gene ID" value="MJ_1146"/>
</dbReference>
<dbReference type="GeneID" id="1452042"/>
<dbReference type="KEGG" id="mja:MJ_1146"/>
<dbReference type="eggNOG" id="arCOG00493">
    <property type="taxonomic scope" value="Archaea"/>
</dbReference>
<dbReference type="HOGENOM" id="CLU_069533_0_0_2"/>
<dbReference type="InParanoid" id="Q58546"/>
<dbReference type="OrthoDB" id="295712at2157"/>
<dbReference type="PhylomeDB" id="Q58546"/>
<dbReference type="BRENDA" id="1.2.1.59">
    <property type="organism ID" value="3260"/>
</dbReference>
<dbReference type="UniPathway" id="UPA00109">
    <property type="reaction ID" value="UER00184"/>
</dbReference>
<dbReference type="EvolutionaryTrace" id="Q58546"/>
<dbReference type="Proteomes" id="UP000000805">
    <property type="component" value="Chromosome"/>
</dbReference>
<dbReference type="GO" id="GO:0005737">
    <property type="term" value="C:cytoplasm"/>
    <property type="evidence" value="ECO:0007669"/>
    <property type="project" value="UniProtKB-SubCell"/>
</dbReference>
<dbReference type="GO" id="GO:0004365">
    <property type="term" value="F:glyceraldehyde-3-phosphate dehydrogenase (NAD+) (phosphorylating) activity"/>
    <property type="evidence" value="ECO:0007669"/>
    <property type="project" value="UniProtKB-UniRule"/>
</dbReference>
<dbReference type="GO" id="GO:0047100">
    <property type="term" value="F:glyceraldehyde-3-phosphate dehydrogenase (NADP+) (phosphorylating) activity"/>
    <property type="evidence" value="ECO:0007669"/>
    <property type="project" value="RHEA"/>
</dbReference>
<dbReference type="GO" id="GO:0051287">
    <property type="term" value="F:NAD binding"/>
    <property type="evidence" value="ECO:0007669"/>
    <property type="project" value="InterPro"/>
</dbReference>
<dbReference type="GO" id="GO:0050661">
    <property type="term" value="F:NADP binding"/>
    <property type="evidence" value="ECO:0007669"/>
    <property type="project" value="InterPro"/>
</dbReference>
<dbReference type="GO" id="GO:0006096">
    <property type="term" value="P:glycolytic process"/>
    <property type="evidence" value="ECO:0007669"/>
    <property type="project" value="UniProtKB-UniRule"/>
</dbReference>
<dbReference type="CDD" id="cd18127">
    <property type="entry name" value="GAPDH_II_C"/>
    <property type="match status" value="1"/>
</dbReference>
<dbReference type="CDD" id="cd02278">
    <property type="entry name" value="GAPDH_II_N"/>
    <property type="match status" value="1"/>
</dbReference>
<dbReference type="Gene3D" id="3.30.360.10">
    <property type="entry name" value="Dihydrodipicolinate Reductase, domain 2"/>
    <property type="match status" value="1"/>
</dbReference>
<dbReference type="Gene3D" id="3.40.50.720">
    <property type="entry name" value="NAD(P)-binding Rossmann-like Domain"/>
    <property type="match status" value="1"/>
</dbReference>
<dbReference type="HAMAP" id="MF_00559">
    <property type="entry name" value="G3P_dehdrog_arch"/>
    <property type="match status" value="1"/>
</dbReference>
<dbReference type="InterPro" id="IPR020831">
    <property type="entry name" value="GlycerAld/Erythrose_P_DH"/>
</dbReference>
<dbReference type="InterPro" id="IPR020830">
    <property type="entry name" value="GlycerAld_3-P_DH_AS"/>
</dbReference>
<dbReference type="InterPro" id="IPR020829">
    <property type="entry name" value="GlycerAld_3-P_DH_cat"/>
</dbReference>
<dbReference type="InterPro" id="IPR020828">
    <property type="entry name" value="GlycerAld_3-P_DH_NAD(P)-bd"/>
</dbReference>
<dbReference type="InterPro" id="IPR006436">
    <property type="entry name" value="Glyceraldehyde-3-P_DH_2_arc"/>
</dbReference>
<dbReference type="InterPro" id="IPR036291">
    <property type="entry name" value="NAD(P)-bd_dom_sf"/>
</dbReference>
<dbReference type="NCBIfam" id="TIGR01546">
    <property type="entry name" value="GAPDH-II_archae"/>
    <property type="match status" value="1"/>
</dbReference>
<dbReference type="NCBIfam" id="NF003251">
    <property type="entry name" value="PRK04207.1"/>
    <property type="match status" value="1"/>
</dbReference>
<dbReference type="Pfam" id="PF02800">
    <property type="entry name" value="Gp_dh_C"/>
    <property type="match status" value="1"/>
</dbReference>
<dbReference type="PIRSF" id="PIRSF000149">
    <property type="entry name" value="GAP_DH"/>
    <property type="match status" value="1"/>
</dbReference>
<dbReference type="SMART" id="SM00846">
    <property type="entry name" value="Gp_dh_N"/>
    <property type="match status" value="1"/>
</dbReference>
<dbReference type="SUPFAM" id="SSF55347">
    <property type="entry name" value="Glyceraldehyde-3-phosphate dehydrogenase-like, C-terminal domain"/>
    <property type="match status" value="1"/>
</dbReference>
<dbReference type="SUPFAM" id="SSF51735">
    <property type="entry name" value="NAD(P)-binding Rossmann-fold domains"/>
    <property type="match status" value="1"/>
</dbReference>
<dbReference type="PROSITE" id="PS00071">
    <property type="entry name" value="GAPDH"/>
    <property type="match status" value="1"/>
</dbReference>